<reference key="1">
    <citation type="submission" date="2004-06" db="EMBL/GenBank/DDBJ databases">
        <authorList>
            <consortium name="NIH - Xenopus Gene Collection (XGC) project"/>
        </authorList>
    </citation>
    <scope>NUCLEOTIDE SEQUENCE [LARGE SCALE MRNA] (ISOFORMS 1 AND 2)</scope>
    <source>
        <tissue>Embryo</tissue>
        <tissue>Testis</tissue>
    </source>
</reference>
<feature type="chain" id="PRO_0000249000" description="UBX domain-containing protein 1-A">
    <location>
        <begin position="1"/>
        <end position="296"/>
    </location>
</feature>
<feature type="domain" description="UBA" evidence="3">
    <location>
        <begin position="1"/>
        <end position="42"/>
    </location>
</feature>
<feature type="domain" description="UBX" evidence="4">
    <location>
        <begin position="214"/>
        <end position="293"/>
    </location>
</feature>
<feature type="region of interest" description="Disordered" evidence="5">
    <location>
        <begin position="43"/>
        <end position="216"/>
    </location>
</feature>
<feature type="coiled-coil region" evidence="2">
    <location>
        <begin position="87"/>
        <end position="177"/>
    </location>
</feature>
<feature type="compositionally biased region" description="Low complexity" evidence="5">
    <location>
        <begin position="61"/>
        <end position="75"/>
    </location>
</feature>
<feature type="compositionally biased region" description="Basic and acidic residues" evidence="5">
    <location>
        <begin position="86"/>
        <end position="100"/>
    </location>
</feature>
<feature type="compositionally biased region" description="Basic and acidic residues" evidence="5">
    <location>
        <begin position="107"/>
        <end position="123"/>
    </location>
</feature>
<feature type="compositionally biased region" description="Basic and acidic residues" evidence="5">
    <location>
        <begin position="138"/>
        <end position="178"/>
    </location>
</feature>
<feature type="compositionally biased region" description="Low complexity" evidence="5">
    <location>
        <begin position="191"/>
        <end position="206"/>
    </location>
</feature>
<feature type="splice variant" id="VSP_020350" description="In isoform 2." evidence="6">
    <original>T</original>
    <variation>TDTA</variation>
    <location>
        <position position="61"/>
    </location>
</feature>
<sequence>MAECSTLESLIEMGFSSTRAEKALTATGNQGIEPAMDWLVEHEDDPDIDEPSVVVPEGSSTDTADTTDTTDTTDTQGMDTSAERLPLTEEEKEKQTKRMMELVAQKQNEREEREKKERIEQEKQRRKHGQELSAIKQKMQEQEMQKAAEDRRREKQEEKMARERVREKIARDKADRARRFGGASSEPISPPAETSIPATTPSPSSPVQEPPTKKEYDQCRIQVRLLDGSALSQTFRAREQLAAVRLYVELNWPGGPPGPFSLLTSFPQRVFTEEDMEKPLQELGLVPTAVLIVAKK</sequence>
<keyword id="KW-0025">Alternative splicing</keyword>
<keyword id="KW-0175">Coiled coil</keyword>
<keyword id="KW-0963">Cytoplasm</keyword>
<keyword id="KW-1185">Reference proteome</keyword>
<evidence type="ECO:0000250" key="1"/>
<evidence type="ECO:0000255" key="2"/>
<evidence type="ECO:0000255" key="3">
    <source>
        <dbReference type="PROSITE-ProRule" id="PRU00212"/>
    </source>
</evidence>
<evidence type="ECO:0000255" key="4">
    <source>
        <dbReference type="PROSITE-ProRule" id="PRU00215"/>
    </source>
</evidence>
<evidence type="ECO:0000256" key="5">
    <source>
        <dbReference type="SAM" id="MobiDB-lite"/>
    </source>
</evidence>
<evidence type="ECO:0000303" key="6">
    <source ref="1"/>
</evidence>
<gene>
    <name type="primary">ubxn1-a</name>
    <name type="synonym">saks1-a</name>
</gene>
<organism>
    <name type="scientific">Xenopus laevis</name>
    <name type="common">African clawed frog</name>
    <dbReference type="NCBI Taxonomy" id="8355"/>
    <lineage>
        <taxon>Eukaryota</taxon>
        <taxon>Metazoa</taxon>
        <taxon>Chordata</taxon>
        <taxon>Craniata</taxon>
        <taxon>Vertebrata</taxon>
        <taxon>Euteleostomi</taxon>
        <taxon>Amphibia</taxon>
        <taxon>Batrachia</taxon>
        <taxon>Anura</taxon>
        <taxon>Pipoidea</taxon>
        <taxon>Pipidae</taxon>
        <taxon>Xenopodinae</taxon>
        <taxon>Xenopus</taxon>
        <taxon>Xenopus</taxon>
    </lineage>
</organism>
<accession>Q6IP50</accession>
<accession>Q3B8K6</accession>
<comment type="function">
    <text evidence="1">Component of a complex required to couple deglycosylation and proteasome-mediated degradation of misfolded proteins in the endoplasmic reticulum that are retrotranslocated in the cytosol. Involved in ubiquitin-proteasome systems (By similarity).</text>
</comment>
<comment type="subcellular location">
    <subcellularLocation>
        <location evidence="1">Cytoplasm</location>
    </subcellularLocation>
</comment>
<comment type="alternative products">
    <event type="alternative splicing"/>
    <isoform>
        <id>Q6IP50-1</id>
        <name>1</name>
        <sequence type="displayed"/>
    </isoform>
    <isoform>
        <id>Q6IP50-2</id>
        <name>2</name>
        <sequence type="described" ref="VSP_020350"/>
    </isoform>
</comment>
<dbReference type="EMBL" id="BC072068">
    <property type="protein sequence ID" value="AAH72068.1"/>
    <property type="molecule type" value="mRNA"/>
</dbReference>
<dbReference type="EMBL" id="BC106269">
    <property type="protein sequence ID" value="AAI06270.1"/>
    <property type="molecule type" value="mRNA"/>
</dbReference>
<dbReference type="RefSeq" id="NP_001085388.1">
    <molecule id="Q6IP50-2"/>
    <property type="nucleotide sequence ID" value="NM_001091919.1"/>
</dbReference>
<dbReference type="RefSeq" id="XP_018115063.1">
    <property type="nucleotide sequence ID" value="XM_018259574.1"/>
</dbReference>
<dbReference type="SMR" id="Q6IP50"/>
<dbReference type="DNASU" id="443814"/>
<dbReference type="GeneID" id="443814"/>
<dbReference type="KEGG" id="xla:443814"/>
<dbReference type="AGR" id="Xenbase:XB-GENE-6251745"/>
<dbReference type="CTD" id="443814"/>
<dbReference type="Xenbase" id="XB-GENE-6251745">
    <property type="gene designation" value="ubxn1.S"/>
</dbReference>
<dbReference type="OMA" id="VQFHAER"/>
<dbReference type="OrthoDB" id="10254930at2759"/>
<dbReference type="Proteomes" id="UP000186698">
    <property type="component" value="Chromosome 4S"/>
</dbReference>
<dbReference type="Bgee" id="443814">
    <property type="expression patterns" value="Expressed in testis and 19 other cell types or tissues"/>
</dbReference>
<dbReference type="GO" id="GO:0005737">
    <property type="term" value="C:cytoplasm"/>
    <property type="evidence" value="ECO:0000318"/>
    <property type="project" value="GO_Central"/>
</dbReference>
<dbReference type="GO" id="GO:0005634">
    <property type="term" value="C:nucleus"/>
    <property type="evidence" value="ECO:0000318"/>
    <property type="project" value="GO_Central"/>
</dbReference>
<dbReference type="GO" id="GO:0036435">
    <property type="term" value="F:K48-linked polyubiquitin modification-dependent protein binding"/>
    <property type="evidence" value="ECO:0000318"/>
    <property type="project" value="GO_Central"/>
</dbReference>
<dbReference type="GO" id="GO:0032435">
    <property type="term" value="P:negative regulation of proteasomal ubiquitin-dependent protein catabolic process"/>
    <property type="evidence" value="ECO:0000318"/>
    <property type="project" value="GO_Central"/>
</dbReference>
<dbReference type="GO" id="GO:1903094">
    <property type="term" value="P:negative regulation of protein K48-linked deubiquitination"/>
    <property type="evidence" value="ECO:0000318"/>
    <property type="project" value="GO_Central"/>
</dbReference>
<dbReference type="GO" id="GO:0031397">
    <property type="term" value="P:negative regulation of protein ubiquitination"/>
    <property type="evidence" value="ECO:0000318"/>
    <property type="project" value="GO_Central"/>
</dbReference>
<dbReference type="CDD" id="cd14302">
    <property type="entry name" value="UBA_UBXN1"/>
    <property type="match status" value="1"/>
</dbReference>
<dbReference type="CDD" id="cd01772">
    <property type="entry name" value="UBX_UBXN1"/>
    <property type="match status" value="1"/>
</dbReference>
<dbReference type="FunFam" id="1.10.8.10:FF:000044">
    <property type="entry name" value="UBX domain-containing protein 1"/>
    <property type="match status" value="1"/>
</dbReference>
<dbReference type="FunFam" id="3.10.20.90:FF:000134">
    <property type="entry name" value="UBX domain-containing protein 1"/>
    <property type="match status" value="1"/>
</dbReference>
<dbReference type="Gene3D" id="1.10.8.10">
    <property type="entry name" value="DNA helicase RuvA subunit, C-terminal domain"/>
    <property type="match status" value="1"/>
</dbReference>
<dbReference type="Gene3D" id="3.10.20.90">
    <property type="entry name" value="Phosphatidylinositol 3-kinase Catalytic Subunit, Chain A, domain 1"/>
    <property type="match status" value="1"/>
</dbReference>
<dbReference type="InterPro" id="IPR015940">
    <property type="entry name" value="UBA"/>
</dbReference>
<dbReference type="InterPro" id="IPR009060">
    <property type="entry name" value="UBA-like_sf"/>
</dbReference>
<dbReference type="InterPro" id="IPR041923">
    <property type="entry name" value="UBA_UBXN1"/>
</dbReference>
<dbReference type="InterPro" id="IPR029071">
    <property type="entry name" value="Ubiquitin-like_domsf"/>
</dbReference>
<dbReference type="InterPro" id="IPR001012">
    <property type="entry name" value="UBX_dom"/>
</dbReference>
<dbReference type="PANTHER" id="PTHR46340">
    <property type="entry name" value="UBX DOMAIN-CONTAINING PROTEIN 1"/>
    <property type="match status" value="1"/>
</dbReference>
<dbReference type="PANTHER" id="PTHR46340:SF1">
    <property type="entry name" value="UBX DOMAIN-CONTAINING PROTEIN 1"/>
    <property type="match status" value="1"/>
</dbReference>
<dbReference type="Pfam" id="PF22562">
    <property type="entry name" value="UBA_7"/>
    <property type="match status" value="1"/>
</dbReference>
<dbReference type="Pfam" id="PF00789">
    <property type="entry name" value="UBX"/>
    <property type="match status" value="1"/>
</dbReference>
<dbReference type="SMART" id="SM00165">
    <property type="entry name" value="UBA"/>
    <property type="match status" value="1"/>
</dbReference>
<dbReference type="SMART" id="SM00166">
    <property type="entry name" value="UBX"/>
    <property type="match status" value="1"/>
</dbReference>
<dbReference type="SUPFAM" id="SSF46934">
    <property type="entry name" value="UBA-like"/>
    <property type="match status" value="1"/>
</dbReference>
<dbReference type="SUPFAM" id="SSF54236">
    <property type="entry name" value="Ubiquitin-like"/>
    <property type="match status" value="1"/>
</dbReference>
<dbReference type="PROSITE" id="PS50030">
    <property type="entry name" value="UBA"/>
    <property type="match status" value="1"/>
</dbReference>
<dbReference type="PROSITE" id="PS50033">
    <property type="entry name" value="UBX"/>
    <property type="match status" value="1"/>
</dbReference>
<protein>
    <recommendedName>
        <fullName>UBX domain-containing protein 1-A</fullName>
    </recommendedName>
    <alternativeName>
        <fullName>SAPK substrate protein 1-A</fullName>
    </alternativeName>
</protein>
<proteinExistence type="evidence at transcript level"/>
<name>UBX1A_XENLA</name>